<organism>
    <name type="scientific">Pongo abelii</name>
    <name type="common">Sumatran orangutan</name>
    <name type="synonym">Pongo pygmaeus abelii</name>
    <dbReference type="NCBI Taxonomy" id="9601"/>
    <lineage>
        <taxon>Eukaryota</taxon>
        <taxon>Metazoa</taxon>
        <taxon>Chordata</taxon>
        <taxon>Craniata</taxon>
        <taxon>Vertebrata</taxon>
        <taxon>Euteleostomi</taxon>
        <taxon>Mammalia</taxon>
        <taxon>Eutheria</taxon>
        <taxon>Euarchontoglires</taxon>
        <taxon>Primates</taxon>
        <taxon>Haplorrhini</taxon>
        <taxon>Catarrhini</taxon>
        <taxon>Hominidae</taxon>
        <taxon>Pongo</taxon>
    </lineage>
</organism>
<sequence>MPRPRRVSQLLDLCLWCFMKNISRYLTDIKPLPPNIKDRLIKIMSMQGRITDSNISEILHPEVQTLDLRSCDISDAALLHLSNCRKLKKLNLNASKGNRVSVTSEGIKVVASSCSYLHEASLKRCCNLTDEGVVALALNCQLLKIINLGGCLSITDVSLHALGKNCPFLQCVDFSATQVSDSGVIALVSGPCAKKLEEIHMGHCVNLTDGAVEAVLTYCPQIRILLFHGCPLITDHSREVLEQLVGPNKLKQVTWTVY</sequence>
<reference key="1">
    <citation type="submission" date="2004-11" db="EMBL/GenBank/DDBJ databases">
        <authorList>
            <consortium name="The German cDNA consortium"/>
        </authorList>
    </citation>
    <scope>NUCLEOTIDE SEQUENCE [LARGE SCALE MRNA]</scope>
    <source>
        <tissue>Brain cortex</tissue>
    </source>
</reference>
<proteinExistence type="evidence at transcript level"/>
<protein>
    <recommendedName>
        <fullName>Protein AMN1 homolog</fullName>
    </recommendedName>
</protein>
<name>AMN1_PONAB</name>
<gene>
    <name type="primary">AMN1</name>
</gene>
<evidence type="ECO:0000250" key="1">
    <source>
        <dbReference type="UniProtKB" id="B8JKV0"/>
    </source>
</evidence>
<evidence type="ECO:0000305" key="2"/>
<comment type="subunit">
    <text evidence="1">Interacts with TASOR.</text>
</comment>
<comment type="similarity">
    <text evidence="2">Belongs to the AMN1 family.</text>
</comment>
<dbReference type="EMBL" id="CR859619">
    <property type="protein sequence ID" value="CAH91781.1"/>
    <property type="molecule type" value="mRNA"/>
</dbReference>
<dbReference type="RefSeq" id="NP_001126032.1">
    <property type="nucleotide sequence ID" value="NM_001132560.1"/>
</dbReference>
<dbReference type="SMR" id="Q5R8X9"/>
<dbReference type="STRING" id="9601.ENSPPYP00000005022"/>
<dbReference type="GeneID" id="100172981"/>
<dbReference type="KEGG" id="pon:100172981"/>
<dbReference type="CTD" id="196394"/>
<dbReference type="eggNOG" id="KOG1947">
    <property type="taxonomic scope" value="Eukaryota"/>
</dbReference>
<dbReference type="InParanoid" id="Q5R8X9"/>
<dbReference type="OrthoDB" id="10257471at2759"/>
<dbReference type="Proteomes" id="UP000001595">
    <property type="component" value="Unplaced"/>
</dbReference>
<dbReference type="GO" id="GO:0019005">
    <property type="term" value="C:SCF ubiquitin ligase complex"/>
    <property type="evidence" value="ECO:0007669"/>
    <property type="project" value="TreeGrafter"/>
</dbReference>
<dbReference type="GO" id="GO:0031146">
    <property type="term" value="P:SCF-dependent proteasomal ubiquitin-dependent protein catabolic process"/>
    <property type="evidence" value="ECO:0007669"/>
    <property type="project" value="TreeGrafter"/>
</dbReference>
<dbReference type="CDD" id="cd09293">
    <property type="entry name" value="AMN1"/>
    <property type="match status" value="1"/>
</dbReference>
<dbReference type="FunFam" id="3.80.10.10:FF:000178">
    <property type="entry name" value="protein AMN1 homolog isoform X1"/>
    <property type="match status" value="1"/>
</dbReference>
<dbReference type="Gene3D" id="3.80.10.10">
    <property type="entry name" value="Ribonuclease Inhibitor"/>
    <property type="match status" value="1"/>
</dbReference>
<dbReference type="InterPro" id="IPR001611">
    <property type="entry name" value="Leu-rich_rpt"/>
</dbReference>
<dbReference type="InterPro" id="IPR006553">
    <property type="entry name" value="Leu-rich_rpt_Cys-con_subtyp"/>
</dbReference>
<dbReference type="InterPro" id="IPR032675">
    <property type="entry name" value="LRR_dom_sf"/>
</dbReference>
<dbReference type="PANTHER" id="PTHR13318">
    <property type="entry name" value="PARTNER OF PAIRED, ISOFORM B-RELATED"/>
    <property type="match status" value="1"/>
</dbReference>
<dbReference type="PANTHER" id="PTHR13318:SF254">
    <property type="entry name" value="PROTEIN AMN1 HOMOLOG"/>
    <property type="match status" value="1"/>
</dbReference>
<dbReference type="Pfam" id="PF13516">
    <property type="entry name" value="LRR_6"/>
    <property type="match status" value="3"/>
</dbReference>
<dbReference type="SMART" id="SM00367">
    <property type="entry name" value="LRR_CC"/>
    <property type="match status" value="6"/>
</dbReference>
<dbReference type="SUPFAM" id="SSF52047">
    <property type="entry name" value="RNI-like"/>
    <property type="match status" value="1"/>
</dbReference>
<feature type="chain" id="PRO_0000289274" description="Protein AMN1 homolog">
    <location>
        <begin position="1"/>
        <end position="258"/>
    </location>
</feature>
<accession>Q5R8X9</accession>
<keyword id="KW-1185">Reference proteome</keyword>